<gene>
    <name type="primary">EXPA11</name>
    <name type="synonym">EXP11</name>
    <name type="ordered locus">Os01g0274500</name>
    <name type="ordered locus">LOC_Os01g16770</name>
    <name type="ORF">P0424A08.10</name>
</gene>
<sequence length="248" mass="25065">MELLRLLAVAAVAAMAAEVAAGGDSGWSSGSATFYGGSDASGTMGGACGYGNLYSAGYGTSTAALSTALFNNGQSCGACFEVRCGGGGSCLAGTVAVTATNLCPPNYALAGDAGGWCNPPRPHFDMAEPAFTRIAQARAGVVPVQYRRVACAKQGGIRFTITGHSYFNLVLVTNVGGAGDVTAVSVKGSRSGWQAMSHNWGANWQNGANLDGQPLSFRVTASDGRTVTSDNVAPSGWSFGQTFSGGQF</sequence>
<organism>
    <name type="scientific">Oryza sativa subsp. japonica</name>
    <name type="common">Rice</name>
    <dbReference type="NCBI Taxonomy" id="39947"/>
    <lineage>
        <taxon>Eukaryota</taxon>
        <taxon>Viridiplantae</taxon>
        <taxon>Streptophyta</taxon>
        <taxon>Embryophyta</taxon>
        <taxon>Tracheophyta</taxon>
        <taxon>Spermatophyta</taxon>
        <taxon>Magnoliopsida</taxon>
        <taxon>Liliopsida</taxon>
        <taxon>Poales</taxon>
        <taxon>Poaceae</taxon>
        <taxon>BOP clade</taxon>
        <taxon>Oryzoideae</taxon>
        <taxon>Oryzeae</taxon>
        <taxon>Oryzinae</taxon>
        <taxon>Oryza</taxon>
        <taxon>Oryza sativa</taxon>
    </lineage>
</organism>
<name>EXP11_ORYSJ</name>
<keyword id="KW-0134">Cell wall</keyword>
<keyword id="KW-0961">Cell wall biogenesis/degradation</keyword>
<keyword id="KW-0472">Membrane</keyword>
<keyword id="KW-1185">Reference proteome</keyword>
<keyword id="KW-0964">Secreted</keyword>
<keyword id="KW-0732">Signal</keyword>
<proteinExistence type="evidence at transcript level"/>
<protein>
    <recommendedName>
        <fullName>Expansin-A11</fullName>
    </recommendedName>
    <alternativeName>
        <fullName>Alpha-expansin-11</fullName>
    </alternativeName>
    <alternativeName>
        <fullName>OsEXP11</fullName>
    </alternativeName>
    <alternativeName>
        <fullName>OsEXPA11</fullName>
    </alternativeName>
    <alternativeName>
        <fullName>OsaEXPa1.25</fullName>
    </alternativeName>
</protein>
<comment type="function">
    <text evidence="1">May cause loosening and extension of plant cell walls by disrupting non-covalent bonding between cellulose microfibrils and matrix glucans. No enzymatic activity has been found. May be required for rapid internodal elongation in deepwater rice during submergence (By similarity).</text>
</comment>
<comment type="subcellular location">
    <subcellularLocation>
        <location evidence="1">Secreted</location>
        <location evidence="1">Cell wall</location>
    </subcellularLocation>
    <subcellularLocation>
        <location evidence="1">Membrane</location>
        <topology evidence="1">Peripheral membrane protein</topology>
    </subcellularLocation>
</comment>
<comment type="tissue specificity">
    <text evidence="5">Expressed in roots.</text>
</comment>
<comment type="similarity">
    <text evidence="6">Belongs to the expansin family. Expansin A subfamily.</text>
</comment>
<comment type="sequence caution" evidence="6">
    <conflict type="erroneous initiation">
        <sequence resource="EMBL-CDS" id="BAD81125"/>
    </conflict>
</comment>
<comment type="online information" name="EXPANSIN homepage">
    <link uri="https://www.dept.psu.edu/biology/groups/expansins/index.htm"/>
</comment>
<accession>Q4PNY1</accession>
<accession>Q5NBN1</accession>
<reference key="1">
    <citation type="journal article" date="2002" name="Nature">
        <title>The genome sequence and structure of rice chromosome 1.</title>
        <authorList>
            <person name="Sasaki T."/>
            <person name="Matsumoto T."/>
            <person name="Yamamoto K."/>
            <person name="Sakata K."/>
            <person name="Baba T."/>
            <person name="Katayose Y."/>
            <person name="Wu J."/>
            <person name="Niimura Y."/>
            <person name="Cheng Z."/>
            <person name="Nagamura Y."/>
            <person name="Antonio B.A."/>
            <person name="Kanamori H."/>
            <person name="Hosokawa S."/>
            <person name="Masukawa M."/>
            <person name="Arikawa K."/>
            <person name="Chiden Y."/>
            <person name="Hayashi M."/>
            <person name="Okamoto M."/>
            <person name="Ando T."/>
            <person name="Aoki H."/>
            <person name="Arita K."/>
            <person name="Hamada M."/>
            <person name="Harada C."/>
            <person name="Hijishita S."/>
            <person name="Honda M."/>
            <person name="Ichikawa Y."/>
            <person name="Idonuma A."/>
            <person name="Iijima M."/>
            <person name="Ikeda M."/>
            <person name="Ikeno M."/>
            <person name="Ito S."/>
            <person name="Ito T."/>
            <person name="Ito Y."/>
            <person name="Ito Y."/>
            <person name="Iwabuchi A."/>
            <person name="Kamiya K."/>
            <person name="Karasawa W."/>
            <person name="Katagiri S."/>
            <person name="Kikuta A."/>
            <person name="Kobayashi N."/>
            <person name="Kono I."/>
            <person name="Machita K."/>
            <person name="Maehara T."/>
            <person name="Mizuno H."/>
            <person name="Mizubayashi T."/>
            <person name="Mukai Y."/>
            <person name="Nagasaki H."/>
            <person name="Nakashima M."/>
            <person name="Nakama Y."/>
            <person name="Nakamichi Y."/>
            <person name="Nakamura M."/>
            <person name="Namiki N."/>
            <person name="Negishi M."/>
            <person name="Ohta I."/>
            <person name="Ono N."/>
            <person name="Saji S."/>
            <person name="Sakai K."/>
            <person name="Shibata M."/>
            <person name="Shimokawa T."/>
            <person name="Shomura A."/>
            <person name="Song J."/>
            <person name="Takazaki Y."/>
            <person name="Terasawa K."/>
            <person name="Tsuji K."/>
            <person name="Waki K."/>
            <person name="Yamagata H."/>
            <person name="Yamane H."/>
            <person name="Yoshiki S."/>
            <person name="Yoshihara R."/>
            <person name="Yukawa K."/>
            <person name="Zhong H."/>
            <person name="Iwama H."/>
            <person name="Endo T."/>
            <person name="Ito H."/>
            <person name="Hahn J.H."/>
            <person name="Kim H.-I."/>
            <person name="Eun M.-Y."/>
            <person name="Yano M."/>
            <person name="Jiang J."/>
            <person name="Gojobori T."/>
        </authorList>
    </citation>
    <scope>NUCLEOTIDE SEQUENCE [LARGE SCALE GENOMIC DNA]</scope>
    <source>
        <strain>cv. Nipponbare</strain>
    </source>
</reference>
<reference key="2">
    <citation type="journal article" date="2005" name="Nature">
        <title>The map-based sequence of the rice genome.</title>
        <authorList>
            <consortium name="International rice genome sequencing project (IRGSP)"/>
        </authorList>
    </citation>
    <scope>NUCLEOTIDE SEQUENCE [LARGE SCALE GENOMIC DNA]</scope>
    <source>
        <strain>cv. Nipponbare</strain>
    </source>
</reference>
<reference key="3">
    <citation type="journal article" date="2013" name="Rice">
        <title>Improvement of the Oryza sativa Nipponbare reference genome using next generation sequence and optical map data.</title>
        <authorList>
            <person name="Kawahara Y."/>
            <person name="de la Bastide M."/>
            <person name="Hamilton J.P."/>
            <person name="Kanamori H."/>
            <person name="McCombie W.R."/>
            <person name="Ouyang S."/>
            <person name="Schwartz D.C."/>
            <person name="Tanaka T."/>
            <person name="Wu J."/>
            <person name="Zhou S."/>
            <person name="Childs K.L."/>
            <person name="Davidson R.M."/>
            <person name="Lin H."/>
            <person name="Quesada-Ocampo L."/>
            <person name="Vaillancourt B."/>
            <person name="Sakai H."/>
            <person name="Lee S.S."/>
            <person name="Kim J."/>
            <person name="Numa H."/>
            <person name="Itoh T."/>
            <person name="Buell C.R."/>
            <person name="Matsumoto T."/>
        </authorList>
    </citation>
    <scope>GENOME REANNOTATION</scope>
    <source>
        <strain>cv. Nipponbare</strain>
    </source>
</reference>
<reference key="4">
    <citation type="journal article" date="2005" name="Mol. Cells">
        <title>Characterization and transcriptional expression of the alpha-expansin gene family in rice.</title>
        <authorList>
            <person name="Shin J.-H."/>
            <person name="Jeong D.-H."/>
            <person name="Park M.C."/>
            <person name="An G."/>
        </authorList>
    </citation>
    <scope>NUCLEOTIDE SEQUENCE [MRNA] OF 4-248</scope>
    <source>
        <strain>cv. Dongjin</strain>
    </source>
</reference>
<reference key="5">
    <citation type="journal article" date="2002" name="Plant Physiol.">
        <title>Expression of alpha-expansin and expansin-like genes in deepwater rice.</title>
        <authorList>
            <person name="Lee Y."/>
            <person name="Kende H."/>
        </authorList>
    </citation>
    <scope>TISSUE SPECIFICITY</scope>
</reference>
<reference key="6">
    <citation type="journal article" date="2004" name="Plant Mol. Biol.">
        <title>Nomenclature for members of the expansin superfamily of genes and proteins.</title>
        <authorList>
            <person name="Kende H."/>
            <person name="Bradford K.J."/>
            <person name="Brummell D.A."/>
            <person name="Cho H.-T."/>
            <person name="Cosgrove D.J."/>
            <person name="Fleming A.J."/>
            <person name="Gehring C."/>
            <person name="Lee Y."/>
            <person name="McQueen-Mason S.J."/>
            <person name="Rose J.K.C."/>
            <person name="Voesenek L.A.C."/>
        </authorList>
    </citation>
    <scope>NOMENCLATURE</scope>
</reference>
<evidence type="ECO:0000250" key="1"/>
<evidence type="ECO:0000255" key="2"/>
<evidence type="ECO:0000255" key="3">
    <source>
        <dbReference type="PROSITE-ProRule" id="PRU00078"/>
    </source>
</evidence>
<evidence type="ECO:0000255" key="4">
    <source>
        <dbReference type="PROSITE-ProRule" id="PRU00079"/>
    </source>
</evidence>
<evidence type="ECO:0000269" key="5">
    <source>
    </source>
</evidence>
<evidence type="ECO:0000305" key="6"/>
<feature type="signal peptide" evidence="2">
    <location>
        <begin position="1"/>
        <end position="22"/>
    </location>
</feature>
<feature type="chain" id="PRO_0000251990" description="Expansin-A11">
    <location>
        <begin position="23"/>
        <end position="248"/>
    </location>
</feature>
<feature type="domain" description="Expansin-like EG45" evidence="4">
    <location>
        <begin position="45"/>
        <end position="156"/>
    </location>
</feature>
<feature type="domain" description="Expansin-like CBD" evidence="3">
    <location>
        <begin position="166"/>
        <end position="245"/>
    </location>
</feature>
<dbReference type="EMBL" id="AP000837">
    <property type="protein sequence ID" value="BAD81125.1"/>
    <property type="status" value="ALT_INIT"/>
    <property type="molecule type" value="Genomic_DNA"/>
</dbReference>
<dbReference type="EMBL" id="AP014957">
    <property type="status" value="NOT_ANNOTATED_CDS"/>
    <property type="molecule type" value="Genomic_DNA"/>
</dbReference>
<dbReference type="EMBL" id="DQ062981">
    <property type="protein sequence ID" value="AAY63997.1"/>
    <property type="molecule type" value="mRNA"/>
</dbReference>
<dbReference type="RefSeq" id="XP_015632122.1">
    <property type="nucleotide sequence ID" value="XM_015776636.1"/>
</dbReference>
<dbReference type="SMR" id="Q4PNY1"/>
<dbReference type="FunCoup" id="Q4PNY1">
    <property type="interactions" value="3"/>
</dbReference>
<dbReference type="STRING" id="39947.Q4PNY1"/>
<dbReference type="PaxDb" id="39947-Q4PNY1"/>
<dbReference type="eggNOG" id="ENOG502QPUJ">
    <property type="taxonomic scope" value="Eukaryota"/>
</dbReference>
<dbReference type="HOGENOM" id="CLU_027462_0_3_1"/>
<dbReference type="InParanoid" id="Q4PNY1"/>
<dbReference type="OrthoDB" id="5823761at2759"/>
<dbReference type="Proteomes" id="UP000000763">
    <property type="component" value="Chromosome 1"/>
</dbReference>
<dbReference type="Proteomes" id="UP000059680">
    <property type="component" value="Chromosome 1"/>
</dbReference>
<dbReference type="GO" id="GO:0005576">
    <property type="term" value="C:extracellular region"/>
    <property type="evidence" value="ECO:0007669"/>
    <property type="project" value="UniProtKB-KW"/>
</dbReference>
<dbReference type="GO" id="GO:0016020">
    <property type="term" value="C:membrane"/>
    <property type="evidence" value="ECO:0007669"/>
    <property type="project" value="UniProtKB-SubCell"/>
</dbReference>
<dbReference type="GO" id="GO:0009828">
    <property type="term" value="P:plant-type cell wall loosening"/>
    <property type="evidence" value="ECO:0000250"/>
    <property type="project" value="UniProtKB"/>
</dbReference>
<dbReference type="CDD" id="cd22274">
    <property type="entry name" value="DPBB_EXPA_N"/>
    <property type="match status" value="1"/>
</dbReference>
<dbReference type="FunFam" id="2.60.40.760:FF:000001">
    <property type="entry name" value="Expansin"/>
    <property type="match status" value="1"/>
</dbReference>
<dbReference type="Gene3D" id="2.60.40.760">
    <property type="entry name" value="Expansin, cellulose-binding-like domain"/>
    <property type="match status" value="1"/>
</dbReference>
<dbReference type="Gene3D" id="2.40.40.10">
    <property type="entry name" value="RlpA-like domain"/>
    <property type="match status" value="1"/>
</dbReference>
<dbReference type="InterPro" id="IPR007118">
    <property type="entry name" value="Expan_Lol_pI"/>
</dbReference>
<dbReference type="InterPro" id="IPR002963">
    <property type="entry name" value="Expansin"/>
</dbReference>
<dbReference type="InterPro" id="IPR007112">
    <property type="entry name" value="Expansin/allergen_DPBB_dom"/>
</dbReference>
<dbReference type="InterPro" id="IPR007117">
    <property type="entry name" value="Expansin_CBD"/>
</dbReference>
<dbReference type="InterPro" id="IPR036749">
    <property type="entry name" value="Expansin_CBD_sf"/>
</dbReference>
<dbReference type="InterPro" id="IPR009009">
    <property type="entry name" value="RlpA-like_DPBB"/>
</dbReference>
<dbReference type="InterPro" id="IPR036908">
    <property type="entry name" value="RlpA-like_sf"/>
</dbReference>
<dbReference type="PANTHER" id="PTHR31867">
    <property type="entry name" value="EXPANSIN-A15"/>
    <property type="match status" value="1"/>
</dbReference>
<dbReference type="Pfam" id="PF03330">
    <property type="entry name" value="DPBB_1"/>
    <property type="match status" value="1"/>
</dbReference>
<dbReference type="Pfam" id="PF01357">
    <property type="entry name" value="Expansin_C"/>
    <property type="match status" value="1"/>
</dbReference>
<dbReference type="PRINTS" id="PR01226">
    <property type="entry name" value="EXPANSIN"/>
</dbReference>
<dbReference type="PRINTS" id="PR01225">
    <property type="entry name" value="EXPANSNFAMLY"/>
</dbReference>
<dbReference type="SMART" id="SM00837">
    <property type="entry name" value="DPBB_1"/>
    <property type="match status" value="1"/>
</dbReference>
<dbReference type="SUPFAM" id="SSF50685">
    <property type="entry name" value="Barwin-like endoglucanases"/>
    <property type="match status" value="1"/>
</dbReference>
<dbReference type="SUPFAM" id="SSF49590">
    <property type="entry name" value="PHL pollen allergen"/>
    <property type="match status" value="1"/>
</dbReference>
<dbReference type="PROSITE" id="PS50843">
    <property type="entry name" value="EXPANSIN_CBD"/>
    <property type="match status" value="1"/>
</dbReference>
<dbReference type="PROSITE" id="PS50842">
    <property type="entry name" value="EXPANSIN_EG45"/>
    <property type="match status" value="1"/>
</dbReference>